<comment type="catalytic activity">
    <reaction evidence="1">
        <text>tRNA(Arg) + L-arginine + ATP = L-arginyl-tRNA(Arg) + AMP + diphosphate</text>
        <dbReference type="Rhea" id="RHEA:20301"/>
        <dbReference type="Rhea" id="RHEA-COMP:9658"/>
        <dbReference type="Rhea" id="RHEA-COMP:9673"/>
        <dbReference type="ChEBI" id="CHEBI:30616"/>
        <dbReference type="ChEBI" id="CHEBI:32682"/>
        <dbReference type="ChEBI" id="CHEBI:33019"/>
        <dbReference type="ChEBI" id="CHEBI:78442"/>
        <dbReference type="ChEBI" id="CHEBI:78513"/>
        <dbReference type="ChEBI" id="CHEBI:456215"/>
        <dbReference type="EC" id="6.1.1.19"/>
    </reaction>
</comment>
<comment type="subunit">
    <text evidence="1">Monomer.</text>
</comment>
<comment type="subcellular location">
    <subcellularLocation>
        <location evidence="1">Cytoplasm</location>
    </subcellularLocation>
</comment>
<comment type="similarity">
    <text evidence="1">Belongs to the class-I aminoacyl-tRNA synthetase family.</text>
</comment>
<gene>
    <name evidence="1" type="primary">argS</name>
    <name type="ordered locus">NE0364</name>
</gene>
<keyword id="KW-0030">Aminoacyl-tRNA synthetase</keyword>
<keyword id="KW-0067">ATP-binding</keyword>
<keyword id="KW-0963">Cytoplasm</keyword>
<keyword id="KW-0436">Ligase</keyword>
<keyword id="KW-0547">Nucleotide-binding</keyword>
<keyword id="KW-0648">Protein biosynthesis</keyword>
<keyword id="KW-1185">Reference proteome</keyword>
<evidence type="ECO:0000255" key="1">
    <source>
        <dbReference type="HAMAP-Rule" id="MF_00123"/>
    </source>
</evidence>
<feature type="chain" id="PRO_0000151584" description="Arginine--tRNA ligase">
    <location>
        <begin position="1"/>
        <end position="586"/>
    </location>
</feature>
<feature type="short sequence motif" description="'HIGH' region">
    <location>
        <begin position="131"/>
        <end position="141"/>
    </location>
</feature>
<proteinExistence type="inferred from homology"/>
<reference key="1">
    <citation type="journal article" date="2003" name="J. Bacteriol.">
        <title>Complete genome sequence of the ammonia-oxidizing bacterium and obligate chemolithoautotroph Nitrosomonas europaea.</title>
        <authorList>
            <person name="Chain P."/>
            <person name="Lamerdin J.E."/>
            <person name="Larimer F.W."/>
            <person name="Regala W."/>
            <person name="Lao V."/>
            <person name="Land M.L."/>
            <person name="Hauser L."/>
            <person name="Hooper A.B."/>
            <person name="Klotz M.G."/>
            <person name="Norton J."/>
            <person name="Sayavedra-Soto L.A."/>
            <person name="Arciero D.M."/>
            <person name="Hommes N.G."/>
            <person name="Whittaker M.M."/>
            <person name="Arp D.J."/>
        </authorList>
    </citation>
    <scope>NUCLEOTIDE SEQUENCE [LARGE SCALE GENOMIC DNA]</scope>
    <source>
        <strain>ATCC 19718 / CIP 103999 / KCTC 2705 / NBRC 14298</strain>
    </source>
</reference>
<organism>
    <name type="scientific">Nitrosomonas europaea (strain ATCC 19718 / CIP 103999 / KCTC 2705 / NBRC 14298)</name>
    <dbReference type="NCBI Taxonomy" id="228410"/>
    <lineage>
        <taxon>Bacteria</taxon>
        <taxon>Pseudomonadati</taxon>
        <taxon>Pseudomonadota</taxon>
        <taxon>Betaproteobacteria</taxon>
        <taxon>Nitrosomonadales</taxon>
        <taxon>Nitrosomonadaceae</taxon>
        <taxon>Nitrosomonas</taxon>
    </lineage>
</organism>
<accession>Q82XC1</accession>
<protein>
    <recommendedName>
        <fullName evidence="1">Arginine--tRNA ligase</fullName>
        <ecNumber evidence="1">6.1.1.19</ecNumber>
    </recommendedName>
    <alternativeName>
        <fullName evidence="1">Arginyl-tRNA synthetase</fullName>
        <shortName evidence="1">ArgRS</shortName>
    </alternativeName>
</protein>
<name>SYR_NITEU</name>
<dbReference type="EC" id="6.1.1.19" evidence="1"/>
<dbReference type="EMBL" id="AL954747">
    <property type="protein sequence ID" value="CAD84275.1"/>
    <property type="molecule type" value="Genomic_DNA"/>
</dbReference>
<dbReference type="RefSeq" id="WP_011110999.1">
    <property type="nucleotide sequence ID" value="NC_004757.1"/>
</dbReference>
<dbReference type="SMR" id="Q82XC1"/>
<dbReference type="STRING" id="228410.NE0364"/>
<dbReference type="GeneID" id="87103570"/>
<dbReference type="KEGG" id="neu:NE0364"/>
<dbReference type="eggNOG" id="COG0018">
    <property type="taxonomic scope" value="Bacteria"/>
</dbReference>
<dbReference type="HOGENOM" id="CLU_006406_0_1_4"/>
<dbReference type="OrthoDB" id="9803211at2"/>
<dbReference type="PhylomeDB" id="Q82XC1"/>
<dbReference type="Proteomes" id="UP000001416">
    <property type="component" value="Chromosome"/>
</dbReference>
<dbReference type="GO" id="GO:0005737">
    <property type="term" value="C:cytoplasm"/>
    <property type="evidence" value="ECO:0007669"/>
    <property type="project" value="UniProtKB-SubCell"/>
</dbReference>
<dbReference type="GO" id="GO:0004814">
    <property type="term" value="F:arginine-tRNA ligase activity"/>
    <property type="evidence" value="ECO:0007669"/>
    <property type="project" value="UniProtKB-UniRule"/>
</dbReference>
<dbReference type="GO" id="GO:0005524">
    <property type="term" value="F:ATP binding"/>
    <property type="evidence" value="ECO:0007669"/>
    <property type="project" value="UniProtKB-UniRule"/>
</dbReference>
<dbReference type="GO" id="GO:0006420">
    <property type="term" value="P:arginyl-tRNA aminoacylation"/>
    <property type="evidence" value="ECO:0007669"/>
    <property type="project" value="UniProtKB-UniRule"/>
</dbReference>
<dbReference type="CDD" id="cd00671">
    <property type="entry name" value="ArgRS_core"/>
    <property type="match status" value="1"/>
</dbReference>
<dbReference type="FunFam" id="1.10.730.10:FF:000008">
    <property type="entry name" value="Arginine--tRNA ligase"/>
    <property type="match status" value="1"/>
</dbReference>
<dbReference type="Gene3D" id="3.30.1360.70">
    <property type="entry name" value="Arginyl tRNA synthetase N-terminal domain"/>
    <property type="match status" value="1"/>
</dbReference>
<dbReference type="Gene3D" id="3.40.50.620">
    <property type="entry name" value="HUPs"/>
    <property type="match status" value="1"/>
</dbReference>
<dbReference type="Gene3D" id="1.10.730.10">
    <property type="entry name" value="Isoleucyl-tRNA Synthetase, Domain 1"/>
    <property type="match status" value="1"/>
</dbReference>
<dbReference type="HAMAP" id="MF_00123">
    <property type="entry name" value="Arg_tRNA_synth"/>
    <property type="match status" value="1"/>
</dbReference>
<dbReference type="InterPro" id="IPR001412">
    <property type="entry name" value="aa-tRNA-synth_I_CS"/>
</dbReference>
<dbReference type="InterPro" id="IPR001278">
    <property type="entry name" value="Arg-tRNA-ligase"/>
</dbReference>
<dbReference type="InterPro" id="IPR005148">
    <property type="entry name" value="Arg-tRNA-synth_N"/>
</dbReference>
<dbReference type="InterPro" id="IPR036695">
    <property type="entry name" value="Arg-tRNA-synth_N_sf"/>
</dbReference>
<dbReference type="InterPro" id="IPR035684">
    <property type="entry name" value="ArgRS_core"/>
</dbReference>
<dbReference type="InterPro" id="IPR008909">
    <property type="entry name" value="DALR_anticod-bd"/>
</dbReference>
<dbReference type="InterPro" id="IPR014729">
    <property type="entry name" value="Rossmann-like_a/b/a_fold"/>
</dbReference>
<dbReference type="InterPro" id="IPR009080">
    <property type="entry name" value="tRNAsynth_Ia_anticodon-bd"/>
</dbReference>
<dbReference type="NCBIfam" id="TIGR00456">
    <property type="entry name" value="argS"/>
    <property type="match status" value="1"/>
</dbReference>
<dbReference type="PANTHER" id="PTHR11956:SF5">
    <property type="entry name" value="ARGININE--TRNA LIGASE, CYTOPLASMIC"/>
    <property type="match status" value="1"/>
</dbReference>
<dbReference type="PANTHER" id="PTHR11956">
    <property type="entry name" value="ARGINYL-TRNA SYNTHETASE"/>
    <property type="match status" value="1"/>
</dbReference>
<dbReference type="Pfam" id="PF03485">
    <property type="entry name" value="Arg_tRNA_synt_N"/>
    <property type="match status" value="1"/>
</dbReference>
<dbReference type="Pfam" id="PF05746">
    <property type="entry name" value="DALR_1"/>
    <property type="match status" value="1"/>
</dbReference>
<dbReference type="Pfam" id="PF00750">
    <property type="entry name" value="tRNA-synt_1d"/>
    <property type="match status" value="1"/>
</dbReference>
<dbReference type="PRINTS" id="PR01038">
    <property type="entry name" value="TRNASYNTHARG"/>
</dbReference>
<dbReference type="SMART" id="SM01016">
    <property type="entry name" value="Arg_tRNA_synt_N"/>
    <property type="match status" value="1"/>
</dbReference>
<dbReference type="SMART" id="SM00836">
    <property type="entry name" value="DALR_1"/>
    <property type="match status" value="1"/>
</dbReference>
<dbReference type="SUPFAM" id="SSF47323">
    <property type="entry name" value="Anticodon-binding domain of a subclass of class I aminoacyl-tRNA synthetases"/>
    <property type="match status" value="1"/>
</dbReference>
<dbReference type="SUPFAM" id="SSF55190">
    <property type="entry name" value="Arginyl-tRNA synthetase (ArgRS), N-terminal 'additional' domain"/>
    <property type="match status" value="1"/>
</dbReference>
<dbReference type="SUPFAM" id="SSF52374">
    <property type="entry name" value="Nucleotidylyl transferase"/>
    <property type="match status" value="1"/>
</dbReference>
<dbReference type="PROSITE" id="PS00178">
    <property type="entry name" value="AA_TRNA_LIGASE_I"/>
    <property type="match status" value="1"/>
</dbReference>
<sequence length="586" mass="65671">MVTTTLPDFKSHCIQLLDQAARQVLPDEVGVQIELLRPKLADHGDYSSNLAMKLARRLRRNPLELAKALIGALPDSSCVEKADVAGGGFINFFLKKTAKQQFLHAVLQAGDSFGHSRLGAGKTIQIEFVSANPTGPLHVGHGRGAAFGASLANIMTAAGYAVTREFYVNDAGRQMDILTLSTWLRYLDLCGLSFSFPANAYRGQYVADMASEIYQAQGDRYAHRSDATIRQLTEISTSTTIDSEDERLDRLITAAKSILDQDYADLHNFVLTEQLADCRNDLMEFGVEFETWFSEQSLFDSGMVARAVQLLDDKKLLYRQDGALWFRSTDFGDEKDRVVQRENGLYTYFASDIAYHLSKYERGFDYLLNIWGADHHGYIPRVKGAIEALSLDPGRLEIALVQFAVLYRDGKKVSMSTRSGEFVTLRQLRQEVGNDAARFFYVLRKSDQHLDFDLDLAKSQSNDNPVYYVQYAHARICSVLGQWGGAEDILARAETELLTDPAELVLLQKMIDFTDTIEAAAKERAPHLIAFFLRELAGEFHSYYNSTRFLVEDESLKITRLALISAVRQILSKGLTLLGVTAPREM</sequence>